<protein>
    <recommendedName>
        <fullName evidence="1">Holliday junction resolvase RecU</fullName>
        <ecNumber evidence="1">3.1.21.10</ecNumber>
    </recommendedName>
    <alternativeName>
        <fullName evidence="1">Recombination protein U homolog</fullName>
    </alternativeName>
</protein>
<gene>
    <name evidence="1" type="primary">recU</name>
    <name type="ordered locus">SAG0299</name>
</gene>
<sequence>MVNYPHQLIRKTTVTKSKKKKIDFANRGMSFEAAINATNDYYLSHELAVIHKKPTPVQIVKVDYPKRSRAKIVEAYFRQASTTDYSGVYKGYYIDFEAKETRQKTAMPMKNFHAHQIEHMANVLQQKGICFVLLHFSTLKETYLLPANELISFYQIDKGNKSMPIDYIRKNGFFVKESAFPQVPYLDIIEEKLLGGDYN</sequence>
<proteinExistence type="inferred from homology"/>
<keyword id="KW-0963">Cytoplasm</keyword>
<keyword id="KW-0227">DNA damage</keyword>
<keyword id="KW-0233">DNA recombination</keyword>
<keyword id="KW-0234">DNA repair</keyword>
<keyword id="KW-0255">Endonuclease</keyword>
<keyword id="KW-0378">Hydrolase</keyword>
<keyword id="KW-0460">Magnesium</keyword>
<keyword id="KW-0479">Metal-binding</keyword>
<keyword id="KW-0540">Nuclease</keyword>
<keyword id="KW-1185">Reference proteome</keyword>
<accession>Q8E1Q4</accession>
<organism>
    <name type="scientific">Streptococcus agalactiae serotype V (strain ATCC BAA-611 / 2603 V/R)</name>
    <dbReference type="NCBI Taxonomy" id="208435"/>
    <lineage>
        <taxon>Bacteria</taxon>
        <taxon>Bacillati</taxon>
        <taxon>Bacillota</taxon>
        <taxon>Bacilli</taxon>
        <taxon>Lactobacillales</taxon>
        <taxon>Streptococcaceae</taxon>
        <taxon>Streptococcus</taxon>
    </lineage>
</organism>
<dbReference type="EC" id="3.1.21.10" evidence="1"/>
<dbReference type="EMBL" id="AE009948">
    <property type="protein sequence ID" value="AAM99206.1"/>
    <property type="molecule type" value="Genomic_DNA"/>
</dbReference>
<dbReference type="RefSeq" id="NP_687334.1">
    <property type="nucleotide sequence ID" value="NC_004116.1"/>
</dbReference>
<dbReference type="RefSeq" id="WP_000248792.1">
    <property type="nucleotide sequence ID" value="NC_004116.1"/>
</dbReference>
<dbReference type="SMR" id="Q8E1Q4"/>
<dbReference type="STRING" id="208435.SAG0299"/>
<dbReference type="GeneID" id="66885272"/>
<dbReference type="KEGG" id="sag:SAG0299"/>
<dbReference type="PATRIC" id="fig|208435.3.peg.297"/>
<dbReference type="HOGENOM" id="CLU_096340_0_0_9"/>
<dbReference type="OrthoDB" id="9783592at2"/>
<dbReference type="Proteomes" id="UP000000821">
    <property type="component" value="Chromosome"/>
</dbReference>
<dbReference type="GO" id="GO:0005737">
    <property type="term" value="C:cytoplasm"/>
    <property type="evidence" value="ECO:0007669"/>
    <property type="project" value="UniProtKB-SubCell"/>
</dbReference>
<dbReference type="GO" id="GO:0004519">
    <property type="term" value="F:endonuclease activity"/>
    <property type="evidence" value="ECO:0007669"/>
    <property type="project" value="UniProtKB-UniRule"/>
</dbReference>
<dbReference type="GO" id="GO:0000287">
    <property type="term" value="F:magnesium ion binding"/>
    <property type="evidence" value="ECO:0007669"/>
    <property type="project" value="UniProtKB-UniRule"/>
</dbReference>
<dbReference type="GO" id="GO:0003676">
    <property type="term" value="F:nucleic acid binding"/>
    <property type="evidence" value="ECO:0007669"/>
    <property type="project" value="InterPro"/>
</dbReference>
<dbReference type="GO" id="GO:0007059">
    <property type="term" value="P:chromosome segregation"/>
    <property type="evidence" value="ECO:0007669"/>
    <property type="project" value="UniProtKB-UniRule"/>
</dbReference>
<dbReference type="GO" id="GO:0006310">
    <property type="term" value="P:DNA recombination"/>
    <property type="evidence" value="ECO:0007669"/>
    <property type="project" value="UniProtKB-UniRule"/>
</dbReference>
<dbReference type="GO" id="GO:0006281">
    <property type="term" value="P:DNA repair"/>
    <property type="evidence" value="ECO:0007669"/>
    <property type="project" value="UniProtKB-UniRule"/>
</dbReference>
<dbReference type="CDD" id="cd22354">
    <property type="entry name" value="RecU-like"/>
    <property type="match status" value="1"/>
</dbReference>
<dbReference type="Gene3D" id="3.40.1350.10">
    <property type="match status" value="1"/>
</dbReference>
<dbReference type="HAMAP" id="MF_00130">
    <property type="entry name" value="RecU"/>
    <property type="match status" value="1"/>
</dbReference>
<dbReference type="InterPro" id="IPR004612">
    <property type="entry name" value="Resolv_RecU"/>
</dbReference>
<dbReference type="InterPro" id="IPR011335">
    <property type="entry name" value="Restrct_endonuc-II-like"/>
</dbReference>
<dbReference type="InterPro" id="IPR011856">
    <property type="entry name" value="tRNA_endonuc-like_dom_sf"/>
</dbReference>
<dbReference type="NCBIfam" id="NF002580">
    <property type="entry name" value="PRK02234.1-1"/>
    <property type="match status" value="1"/>
</dbReference>
<dbReference type="NCBIfam" id="NF002584">
    <property type="entry name" value="PRK02234.1-5"/>
    <property type="match status" value="1"/>
</dbReference>
<dbReference type="NCBIfam" id="TIGR00648">
    <property type="entry name" value="recU"/>
    <property type="match status" value="1"/>
</dbReference>
<dbReference type="Pfam" id="PF03838">
    <property type="entry name" value="RecU"/>
    <property type="match status" value="1"/>
</dbReference>
<dbReference type="PIRSF" id="PIRSF037785">
    <property type="entry name" value="RecU"/>
    <property type="match status" value="1"/>
</dbReference>
<dbReference type="SUPFAM" id="SSF52980">
    <property type="entry name" value="Restriction endonuclease-like"/>
    <property type="match status" value="1"/>
</dbReference>
<reference key="1">
    <citation type="journal article" date="2002" name="Proc. Natl. Acad. Sci. U.S.A.">
        <title>Complete genome sequence and comparative genomic analysis of an emerging human pathogen, serotype V Streptococcus agalactiae.</title>
        <authorList>
            <person name="Tettelin H."/>
            <person name="Masignani V."/>
            <person name="Cieslewicz M.J."/>
            <person name="Eisen J.A."/>
            <person name="Peterson S.N."/>
            <person name="Wessels M.R."/>
            <person name="Paulsen I.T."/>
            <person name="Nelson K.E."/>
            <person name="Margarit I."/>
            <person name="Read T.D."/>
            <person name="Madoff L.C."/>
            <person name="Wolf A.M."/>
            <person name="Beanan M.J."/>
            <person name="Brinkac L.M."/>
            <person name="Daugherty S.C."/>
            <person name="DeBoy R.T."/>
            <person name="Durkin A.S."/>
            <person name="Kolonay J.F."/>
            <person name="Madupu R."/>
            <person name="Lewis M.R."/>
            <person name="Radune D."/>
            <person name="Fedorova N.B."/>
            <person name="Scanlan D."/>
            <person name="Khouri H.M."/>
            <person name="Mulligan S."/>
            <person name="Carty H.A."/>
            <person name="Cline R.T."/>
            <person name="Van Aken S.E."/>
            <person name="Gill J."/>
            <person name="Scarselli M."/>
            <person name="Mora M."/>
            <person name="Iacobini E.T."/>
            <person name="Brettoni C."/>
            <person name="Galli G."/>
            <person name="Mariani M."/>
            <person name="Vegni F."/>
            <person name="Maione D."/>
            <person name="Rinaudo D."/>
            <person name="Rappuoli R."/>
            <person name="Telford J.L."/>
            <person name="Kasper D.L."/>
            <person name="Grandi G."/>
            <person name="Fraser C.M."/>
        </authorList>
    </citation>
    <scope>NUCLEOTIDE SEQUENCE [LARGE SCALE GENOMIC DNA]</scope>
    <source>
        <strain>ATCC BAA-611 / 2603 V/R</strain>
    </source>
</reference>
<evidence type="ECO:0000255" key="1">
    <source>
        <dbReference type="HAMAP-Rule" id="MF_00130"/>
    </source>
</evidence>
<comment type="function">
    <text evidence="1">Endonuclease that resolves Holliday junction intermediates in genetic recombination. Cleaves mobile four-strand junctions by introducing symmetrical nicks in paired strands. Promotes annealing of linear ssDNA with homologous dsDNA. Required for DNA repair, homologous recombination and chromosome segregation.</text>
</comment>
<comment type="catalytic activity">
    <reaction evidence="1">
        <text>Endonucleolytic cleavage at a junction such as a reciprocal single-stranded crossover between two homologous DNA duplexes (Holliday junction).</text>
        <dbReference type="EC" id="3.1.21.10"/>
    </reaction>
</comment>
<comment type="cofactor">
    <cofactor evidence="1">
        <name>Mg(2+)</name>
        <dbReference type="ChEBI" id="CHEBI:18420"/>
    </cofactor>
    <text evidence="1">Binds 1 Mg(2+) ion per subunit.</text>
</comment>
<comment type="subcellular location">
    <subcellularLocation>
        <location evidence="1">Cytoplasm</location>
    </subcellularLocation>
</comment>
<comment type="similarity">
    <text evidence="1">Belongs to the RecU family.</text>
</comment>
<feature type="chain" id="PRO_1000016745" description="Holliday junction resolvase RecU">
    <location>
        <begin position="1"/>
        <end position="199"/>
    </location>
</feature>
<feature type="binding site" evidence="1">
    <location>
        <position position="82"/>
    </location>
    <ligand>
        <name>Mg(2+)</name>
        <dbReference type="ChEBI" id="CHEBI:18420"/>
    </ligand>
</feature>
<feature type="binding site" evidence="1">
    <location>
        <position position="84"/>
    </location>
    <ligand>
        <name>Mg(2+)</name>
        <dbReference type="ChEBI" id="CHEBI:18420"/>
    </ligand>
</feature>
<feature type="binding site" evidence="1">
    <location>
        <position position="97"/>
    </location>
    <ligand>
        <name>Mg(2+)</name>
        <dbReference type="ChEBI" id="CHEBI:18420"/>
    </ligand>
</feature>
<feature type="binding site" evidence="1">
    <location>
        <position position="116"/>
    </location>
    <ligand>
        <name>Mg(2+)</name>
        <dbReference type="ChEBI" id="CHEBI:18420"/>
    </ligand>
</feature>
<feature type="site" description="Transition state stabilizer" evidence="1">
    <location>
        <position position="99"/>
    </location>
</feature>
<name>RECU_STRA5</name>